<keyword id="KW-1185">Reference proteome</keyword>
<keyword id="KW-0687">Ribonucleoprotein</keyword>
<keyword id="KW-0689">Ribosomal protein</keyword>
<evidence type="ECO:0000255" key="1">
    <source>
        <dbReference type="HAMAP-Rule" id="MF_00391"/>
    </source>
</evidence>
<evidence type="ECO:0000305" key="2"/>
<comment type="similarity">
    <text evidence="1">Belongs to the bacterial ribosomal protein bL34 family.</text>
</comment>
<sequence>MKRTYQPKNRRHKRVHGFLKRMSTKTGRNVLKRRRLKGRKRLTA</sequence>
<accession>A4J9S5</accession>
<proteinExistence type="inferred from homology"/>
<organism>
    <name type="scientific">Desulforamulus reducens (strain ATCC BAA-1160 / DSM 100696 / MI-1)</name>
    <name type="common">Desulfotomaculum reducens</name>
    <dbReference type="NCBI Taxonomy" id="349161"/>
    <lineage>
        <taxon>Bacteria</taxon>
        <taxon>Bacillati</taxon>
        <taxon>Bacillota</taxon>
        <taxon>Clostridia</taxon>
        <taxon>Eubacteriales</taxon>
        <taxon>Peptococcaceae</taxon>
        <taxon>Desulforamulus</taxon>
    </lineage>
</organism>
<reference key="1">
    <citation type="submission" date="2007-03" db="EMBL/GenBank/DDBJ databases">
        <title>Complete sequence of Desulfotomaculum reducens MI-1.</title>
        <authorList>
            <consortium name="US DOE Joint Genome Institute"/>
            <person name="Copeland A."/>
            <person name="Lucas S."/>
            <person name="Lapidus A."/>
            <person name="Barry K."/>
            <person name="Detter J.C."/>
            <person name="Glavina del Rio T."/>
            <person name="Hammon N."/>
            <person name="Israni S."/>
            <person name="Dalin E."/>
            <person name="Tice H."/>
            <person name="Pitluck S."/>
            <person name="Sims D."/>
            <person name="Brettin T."/>
            <person name="Bruce D."/>
            <person name="Han C."/>
            <person name="Tapia R."/>
            <person name="Schmutz J."/>
            <person name="Larimer F."/>
            <person name="Land M."/>
            <person name="Hauser L."/>
            <person name="Kyrpides N."/>
            <person name="Kim E."/>
            <person name="Tebo B.M."/>
            <person name="Richardson P."/>
        </authorList>
    </citation>
    <scope>NUCLEOTIDE SEQUENCE [LARGE SCALE GENOMIC DNA]</scope>
    <source>
        <strain>ATCC BAA-1160 / DSM 100696 / MI-1</strain>
    </source>
</reference>
<dbReference type="EMBL" id="CP000612">
    <property type="protein sequence ID" value="ABO51828.1"/>
    <property type="molecule type" value="Genomic_DNA"/>
</dbReference>
<dbReference type="RefSeq" id="WP_011879613.1">
    <property type="nucleotide sequence ID" value="NC_009253.1"/>
</dbReference>
<dbReference type="SMR" id="A4J9S5"/>
<dbReference type="STRING" id="349161.Dred_3329"/>
<dbReference type="KEGG" id="drm:Dred_3329"/>
<dbReference type="eggNOG" id="COG0230">
    <property type="taxonomic scope" value="Bacteria"/>
</dbReference>
<dbReference type="HOGENOM" id="CLU_129938_2_0_9"/>
<dbReference type="OrthoDB" id="1787502at2"/>
<dbReference type="Proteomes" id="UP000001556">
    <property type="component" value="Chromosome"/>
</dbReference>
<dbReference type="GO" id="GO:1990904">
    <property type="term" value="C:ribonucleoprotein complex"/>
    <property type="evidence" value="ECO:0007669"/>
    <property type="project" value="UniProtKB-KW"/>
</dbReference>
<dbReference type="GO" id="GO:0005840">
    <property type="term" value="C:ribosome"/>
    <property type="evidence" value="ECO:0007669"/>
    <property type="project" value="UniProtKB-KW"/>
</dbReference>
<dbReference type="GO" id="GO:0003735">
    <property type="term" value="F:structural constituent of ribosome"/>
    <property type="evidence" value="ECO:0007669"/>
    <property type="project" value="InterPro"/>
</dbReference>
<dbReference type="GO" id="GO:0006412">
    <property type="term" value="P:translation"/>
    <property type="evidence" value="ECO:0007669"/>
    <property type="project" value="UniProtKB-UniRule"/>
</dbReference>
<dbReference type="FunFam" id="1.10.287.3980:FF:000001">
    <property type="entry name" value="Mitochondrial ribosomal protein L34"/>
    <property type="match status" value="1"/>
</dbReference>
<dbReference type="Gene3D" id="1.10.287.3980">
    <property type="match status" value="1"/>
</dbReference>
<dbReference type="HAMAP" id="MF_00391">
    <property type="entry name" value="Ribosomal_bL34"/>
    <property type="match status" value="1"/>
</dbReference>
<dbReference type="InterPro" id="IPR000271">
    <property type="entry name" value="Ribosomal_bL34"/>
</dbReference>
<dbReference type="InterPro" id="IPR020939">
    <property type="entry name" value="Ribosomal_bL34_CS"/>
</dbReference>
<dbReference type="NCBIfam" id="TIGR01030">
    <property type="entry name" value="rpmH_bact"/>
    <property type="match status" value="1"/>
</dbReference>
<dbReference type="PANTHER" id="PTHR14503:SF4">
    <property type="entry name" value="LARGE RIBOSOMAL SUBUNIT PROTEIN BL34M"/>
    <property type="match status" value="1"/>
</dbReference>
<dbReference type="PANTHER" id="PTHR14503">
    <property type="entry name" value="MITOCHONDRIAL RIBOSOMAL PROTEIN 34 FAMILY MEMBER"/>
    <property type="match status" value="1"/>
</dbReference>
<dbReference type="Pfam" id="PF00468">
    <property type="entry name" value="Ribosomal_L34"/>
    <property type="match status" value="1"/>
</dbReference>
<dbReference type="PROSITE" id="PS00784">
    <property type="entry name" value="RIBOSOMAL_L34"/>
    <property type="match status" value="1"/>
</dbReference>
<name>RL34_DESRM</name>
<protein>
    <recommendedName>
        <fullName evidence="1">Large ribosomal subunit protein bL34</fullName>
    </recommendedName>
    <alternativeName>
        <fullName evidence="2">50S ribosomal protein L34</fullName>
    </alternativeName>
</protein>
<gene>
    <name evidence="1" type="primary">rpmH</name>
    <name type="ordered locus">Dred_3329</name>
</gene>
<feature type="chain" id="PRO_1000072216" description="Large ribosomal subunit protein bL34">
    <location>
        <begin position="1"/>
        <end position="44"/>
    </location>
</feature>